<protein>
    <recommendedName>
        <fullName evidence="1">UPF0102 protein PSEEN4497</fullName>
    </recommendedName>
</protein>
<reference key="1">
    <citation type="journal article" date="2006" name="Nat. Biotechnol.">
        <title>Complete genome sequence of the entomopathogenic and metabolically versatile soil bacterium Pseudomonas entomophila.</title>
        <authorList>
            <person name="Vodovar N."/>
            <person name="Vallenet D."/>
            <person name="Cruveiller S."/>
            <person name="Rouy Z."/>
            <person name="Barbe V."/>
            <person name="Acosta C."/>
            <person name="Cattolico L."/>
            <person name="Jubin C."/>
            <person name="Lajus A."/>
            <person name="Segurens B."/>
            <person name="Vacherie B."/>
            <person name="Wincker P."/>
            <person name="Weissenbach J."/>
            <person name="Lemaitre B."/>
            <person name="Medigue C."/>
            <person name="Boccard F."/>
        </authorList>
    </citation>
    <scope>NUCLEOTIDE SEQUENCE [LARGE SCALE GENOMIC DNA]</scope>
    <source>
        <strain>L48</strain>
    </source>
</reference>
<dbReference type="EMBL" id="CT573326">
    <property type="protein sequence ID" value="CAK17179.1"/>
    <property type="molecule type" value="Genomic_DNA"/>
</dbReference>
<dbReference type="RefSeq" id="WP_011535549.1">
    <property type="nucleotide sequence ID" value="NC_008027.1"/>
</dbReference>
<dbReference type="SMR" id="Q1I5A6"/>
<dbReference type="STRING" id="384676.PSEEN4497"/>
<dbReference type="GeneID" id="32807493"/>
<dbReference type="KEGG" id="pen:PSEEN4497"/>
<dbReference type="eggNOG" id="COG0792">
    <property type="taxonomic scope" value="Bacteria"/>
</dbReference>
<dbReference type="HOGENOM" id="CLU_115353_1_0_6"/>
<dbReference type="OrthoDB" id="9794876at2"/>
<dbReference type="Proteomes" id="UP000000658">
    <property type="component" value="Chromosome"/>
</dbReference>
<dbReference type="GO" id="GO:0003676">
    <property type="term" value="F:nucleic acid binding"/>
    <property type="evidence" value="ECO:0007669"/>
    <property type="project" value="InterPro"/>
</dbReference>
<dbReference type="CDD" id="cd20736">
    <property type="entry name" value="PoNe_Nuclease"/>
    <property type="match status" value="1"/>
</dbReference>
<dbReference type="Gene3D" id="3.40.1350.10">
    <property type="match status" value="1"/>
</dbReference>
<dbReference type="HAMAP" id="MF_00048">
    <property type="entry name" value="UPF0102"/>
    <property type="match status" value="1"/>
</dbReference>
<dbReference type="InterPro" id="IPR011335">
    <property type="entry name" value="Restrct_endonuc-II-like"/>
</dbReference>
<dbReference type="InterPro" id="IPR011856">
    <property type="entry name" value="tRNA_endonuc-like_dom_sf"/>
</dbReference>
<dbReference type="InterPro" id="IPR003509">
    <property type="entry name" value="UPF0102_YraN-like"/>
</dbReference>
<dbReference type="NCBIfam" id="NF009150">
    <property type="entry name" value="PRK12497.1-3"/>
    <property type="match status" value="1"/>
</dbReference>
<dbReference type="NCBIfam" id="TIGR00252">
    <property type="entry name" value="YraN family protein"/>
    <property type="match status" value="1"/>
</dbReference>
<dbReference type="PANTHER" id="PTHR34039">
    <property type="entry name" value="UPF0102 PROTEIN YRAN"/>
    <property type="match status" value="1"/>
</dbReference>
<dbReference type="PANTHER" id="PTHR34039:SF1">
    <property type="entry name" value="UPF0102 PROTEIN YRAN"/>
    <property type="match status" value="1"/>
</dbReference>
<dbReference type="Pfam" id="PF02021">
    <property type="entry name" value="UPF0102"/>
    <property type="match status" value="1"/>
</dbReference>
<dbReference type="SUPFAM" id="SSF52980">
    <property type="entry name" value="Restriction endonuclease-like"/>
    <property type="match status" value="1"/>
</dbReference>
<feature type="chain" id="PRO_0000336228" description="UPF0102 protein PSEEN4497">
    <location>
        <begin position="1"/>
        <end position="123"/>
    </location>
</feature>
<name>Y4497_PSEE4</name>
<proteinExistence type="inferred from homology"/>
<comment type="similarity">
    <text evidence="1">Belongs to the UPF0102 family.</text>
</comment>
<sequence>MPDASPSCAGQAAEDHALEHLRGQGLRLLARNWRCKGGELDLVMLDADTVVFVEVRYRLHAGFGGALGSIDGRKQKRLTLAANLFLQSEPRWADKPCRFDVVALQGQGHAGQPLQWLKNAFEC</sequence>
<gene>
    <name type="ordered locus">PSEEN4497</name>
</gene>
<evidence type="ECO:0000255" key="1">
    <source>
        <dbReference type="HAMAP-Rule" id="MF_00048"/>
    </source>
</evidence>
<organism>
    <name type="scientific">Pseudomonas entomophila (strain L48)</name>
    <dbReference type="NCBI Taxonomy" id="384676"/>
    <lineage>
        <taxon>Bacteria</taxon>
        <taxon>Pseudomonadati</taxon>
        <taxon>Pseudomonadota</taxon>
        <taxon>Gammaproteobacteria</taxon>
        <taxon>Pseudomonadales</taxon>
        <taxon>Pseudomonadaceae</taxon>
        <taxon>Pseudomonas</taxon>
    </lineage>
</organism>
<accession>Q1I5A6</accession>